<sequence length="396" mass="43272">MIQTKDIIELTDTYGANNYHPLPIVISKAEGVWVEDPEGNRYMDLLSAYSAVNQGHRHPKIINALIDQANRVTLTSRAFHSDQLGPWYEKVAKLTNKEMVLPMNTGAEAVETAIKTARRWAYDVKKVEANRAEIIVCEDNFHGRTMGAVSMSSNEEYKRGFGPMLPGIIVIPYGDLEALKAAITPNTAAFILEPIQGEAGINIPPAGFLKEALEVCKKENVLFVADEIQTGLGRTGKVFACDWDNVTPDMYILGKALGGGVFPISCAAANRDILGVFEPGSHGSTFGGNPLACAVSIAALEVLEEEKLTERSLQLGEKLVGQLKEIDNPMITEVRGKGLFIGIELNEPARPYCEQLKAAGLLCKETHENVIRIAPPLVISEEDLEWAFQKIKAVLS</sequence>
<accession>Q81TV3</accession>
<accession>Q6I237</accession>
<accession>Q6KVX3</accession>
<proteinExistence type="evidence at protein level"/>
<protein>
    <recommendedName>
        <fullName evidence="1">Ornithine aminotransferase</fullName>
        <shortName evidence="1">OAT</shortName>
        <ecNumber evidence="1">2.6.1.13</ecNumber>
    </recommendedName>
    <alternativeName>
        <fullName evidence="1">Ornithine--oxo-acid aminotransferase</fullName>
    </alternativeName>
</protein>
<keyword id="KW-0002">3D-structure</keyword>
<keyword id="KW-0028">Amino-acid biosynthesis</keyword>
<keyword id="KW-0032">Aminotransferase</keyword>
<keyword id="KW-0963">Cytoplasm</keyword>
<keyword id="KW-0641">Proline biosynthesis</keyword>
<keyword id="KW-0663">Pyridoxal phosphate</keyword>
<keyword id="KW-1185">Reference proteome</keyword>
<keyword id="KW-0808">Transferase</keyword>
<evidence type="ECO:0000255" key="1">
    <source>
        <dbReference type="HAMAP-Rule" id="MF_01689"/>
    </source>
</evidence>
<evidence type="ECO:0007829" key="2">
    <source>
        <dbReference type="PDB" id="3RUY"/>
    </source>
</evidence>
<name>OAT_BACAN</name>
<organism>
    <name type="scientific">Bacillus anthracis</name>
    <dbReference type="NCBI Taxonomy" id="1392"/>
    <lineage>
        <taxon>Bacteria</taxon>
        <taxon>Bacillati</taxon>
        <taxon>Bacillota</taxon>
        <taxon>Bacilli</taxon>
        <taxon>Bacillales</taxon>
        <taxon>Bacillaceae</taxon>
        <taxon>Bacillus</taxon>
        <taxon>Bacillus cereus group</taxon>
    </lineage>
</organism>
<feature type="chain" id="PRO_0000120500" description="Ornithine aminotransferase">
    <location>
        <begin position="1"/>
        <end position="396"/>
    </location>
</feature>
<feature type="modified residue" description="N6-(pyridoxal phosphate)lysine" evidence="1">
    <location>
        <position position="255"/>
    </location>
</feature>
<feature type="helix" evidence="2">
    <location>
        <begin position="7"/>
        <end position="14"/>
    </location>
</feature>
<feature type="strand" evidence="2">
    <location>
        <begin position="28"/>
        <end position="31"/>
    </location>
</feature>
<feature type="strand" evidence="2">
    <location>
        <begin position="33"/>
        <end position="35"/>
    </location>
</feature>
<feature type="strand" evidence="2">
    <location>
        <begin position="41"/>
        <end position="46"/>
    </location>
</feature>
<feature type="helix" evidence="2">
    <location>
        <begin position="47"/>
        <end position="50"/>
    </location>
</feature>
<feature type="helix" evidence="2">
    <location>
        <begin position="59"/>
        <end position="69"/>
    </location>
</feature>
<feature type="strand" evidence="2">
    <location>
        <begin position="79"/>
        <end position="81"/>
    </location>
</feature>
<feature type="helix" evidence="2">
    <location>
        <begin position="84"/>
        <end position="95"/>
    </location>
</feature>
<feature type="strand" evidence="2">
    <location>
        <begin position="98"/>
        <end position="105"/>
    </location>
</feature>
<feature type="helix" evidence="2">
    <location>
        <begin position="106"/>
        <end position="123"/>
    </location>
</feature>
<feature type="strand" evidence="2">
    <location>
        <begin position="133"/>
        <end position="137"/>
    </location>
</feature>
<feature type="helix" evidence="2">
    <location>
        <begin position="146"/>
        <end position="150"/>
    </location>
</feature>
<feature type="turn" evidence="2">
    <location>
        <begin position="155"/>
        <end position="160"/>
    </location>
</feature>
<feature type="strand" evidence="2">
    <location>
        <begin position="166"/>
        <end position="171"/>
    </location>
</feature>
<feature type="helix" evidence="2">
    <location>
        <begin position="176"/>
        <end position="182"/>
    </location>
</feature>
<feature type="strand" evidence="2">
    <location>
        <begin position="187"/>
        <end position="192"/>
    </location>
</feature>
<feature type="strand" evidence="2">
    <location>
        <begin position="194"/>
        <end position="197"/>
    </location>
</feature>
<feature type="turn" evidence="2">
    <location>
        <begin position="198"/>
        <end position="200"/>
    </location>
</feature>
<feature type="helix" evidence="2">
    <location>
        <begin position="208"/>
        <end position="217"/>
    </location>
</feature>
<feature type="turn" evidence="2">
    <location>
        <begin position="218"/>
        <end position="220"/>
    </location>
</feature>
<feature type="strand" evidence="2">
    <location>
        <begin position="222"/>
        <end position="226"/>
    </location>
</feature>
<feature type="turn" evidence="2">
    <location>
        <begin position="228"/>
        <end position="235"/>
    </location>
</feature>
<feature type="strand" evidence="2">
    <location>
        <begin position="236"/>
        <end position="239"/>
    </location>
</feature>
<feature type="helix" evidence="2">
    <location>
        <begin position="240"/>
        <end position="244"/>
    </location>
</feature>
<feature type="strand" evidence="2">
    <location>
        <begin position="249"/>
        <end position="253"/>
    </location>
</feature>
<feature type="turn" evidence="2">
    <location>
        <begin position="257"/>
        <end position="261"/>
    </location>
</feature>
<feature type="strand" evidence="2">
    <location>
        <begin position="265"/>
        <end position="269"/>
    </location>
</feature>
<feature type="helix" evidence="2">
    <location>
        <begin position="271"/>
        <end position="274"/>
    </location>
</feature>
<feature type="helix" evidence="2">
    <location>
        <begin position="290"/>
        <end position="305"/>
    </location>
</feature>
<feature type="helix" evidence="2">
    <location>
        <begin position="308"/>
        <end position="323"/>
    </location>
</feature>
<feature type="strand" evidence="2">
    <location>
        <begin position="331"/>
        <end position="337"/>
    </location>
</feature>
<feature type="strand" evidence="2">
    <location>
        <begin position="340"/>
        <end position="347"/>
    </location>
</feature>
<feature type="helix" evidence="2">
    <location>
        <begin position="350"/>
        <end position="357"/>
    </location>
</feature>
<feature type="turn" evidence="2">
    <location>
        <begin position="358"/>
        <end position="360"/>
    </location>
</feature>
<feature type="turn" evidence="2">
    <location>
        <begin position="367"/>
        <end position="369"/>
    </location>
</feature>
<feature type="strand" evidence="2">
    <location>
        <begin position="370"/>
        <end position="373"/>
    </location>
</feature>
<feature type="helix" evidence="2">
    <location>
        <begin position="381"/>
        <end position="395"/>
    </location>
</feature>
<reference key="1">
    <citation type="journal article" date="2003" name="Nature">
        <title>The genome sequence of Bacillus anthracis Ames and comparison to closely related bacteria.</title>
        <authorList>
            <person name="Read T.D."/>
            <person name="Peterson S.N."/>
            <person name="Tourasse N.J."/>
            <person name="Baillie L.W."/>
            <person name="Paulsen I.T."/>
            <person name="Nelson K.E."/>
            <person name="Tettelin H."/>
            <person name="Fouts D.E."/>
            <person name="Eisen J.A."/>
            <person name="Gill S.R."/>
            <person name="Holtzapple E.K."/>
            <person name="Okstad O.A."/>
            <person name="Helgason E."/>
            <person name="Rilstone J."/>
            <person name="Wu M."/>
            <person name="Kolonay J.F."/>
            <person name="Beanan M.J."/>
            <person name="Dodson R.J."/>
            <person name="Brinkac L.M."/>
            <person name="Gwinn M.L."/>
            <person name="DeBoy R.T."/>
            <person name="Madpu R."/>
            <person name="Daugherty S.C."/>
            <person name="Durkin A.S."/>
            <person name="Haft D.H."/>
            <person name="Nelson W.C."/>
            <person name="Peterson J.D."/>
            <person name="Pop M."/>
            <person name="Khouri H.M."/>
            <person name="Radune D."/>
            <person name="Benton J.L."/>
            <person name="Mahamoud Y."/>
            <person name="Jiang L."/>
            <person name="Hance I.R."/>
            <person name="Weidman J.F."/>
            <person name="Berry K.J."/>
            <person name="Plaut R.D."/>
            <person name="Wolf A.M."/>
            <person name="Watkins K.L."/>
            <person name="Nierman W.C."/>
            <person name="Hazen A."/>
            <person name="Cline R.T."/>
            <person name="Redmond C."/>
            <person name="Thwaite J.E."/>
            <person name="White O."/>
            <person name="Salzberg S.L."/>
            <person name="Thomason B."/>
            <person name="Friedlander A.M."/>
            <person name="Koehler T.M."/>
            <person name="Hanna P.C."/>
            <person name="Kolstoe A.-B."/>
            <person name="Fraser C.M."/>
        </authorList>
    </citation>
    <scope>NUCLEOTIDE SEQUENCE [LARGE SCALE GENOMIC DNA]</scope>
    <source>
        <strain>Ames / isolate Porton</strain>
    </source>
</reference>
<reference key="2">
    <citation type="journal article" date="2009" name="J. Bacteriol.">
        <title>The complete genome sequence of Bacillus anthracis Ames 'Ancestor'.</title>
        <authorList>
            <person name="Ravel J."/>
            <person name="Jiang L."/>
            <person name="Stanley S.T."/>
            <person name="Wilson M.R."/>
            <person name="Decker R.S."/>
            <person name="Read T.D."/>
            <person name="Worsham P."/>
            <person name="Keim P.S."/>
            <person name="Salzberg S.L."/>
            <person name="Fraser-Liggett C.M."/>
            <person name="Rasko D.A."/>
        </authorList>
    </citation>
    <scope>NUCLEOTIDE SEQUENCE [LARGE SCALE GENOMIC DNA]</scope>
    <source>
        <strain>Ames ancestor</strain>
    </source>
</reference>
<reference key="3">
    <citation type="submission" date="2004-01" db="EMBL/GenBank/DDBJ databases">
        <title>Complete genome sequence of Bacillus anthracis Sterne.</title>
        <authorList>
            <person name="Brettin T.S."/>
            <person name="Bruce D."/>
            <person name="Challacombe J.F."/>
            <person name="Gilna P."/>
            <person name="Han C."/>
            <person name="Hill K."/>
            <person name="Hitchcock P."/>
            <person name="Jackson P."/>
            <person name="Keim P."/>
            <person name="Longmire J."/>
            <person name="Lucas S."/>
            <person name="Okinaka R."/>
            <person name="Richardson P."/>
            <person name="Rubin E."/>
            <person name="Tice H."/>
        </authorList>
    </citation>
    <scope>NUCLEOTIDE SEQUENCE [LARGE SCALE GENOMIC DNA]</scope>
    <source>
        <strain>Sterne</strain>
    </source>
</reference>
<gene>
    <name evidence="1" type="primary">rocD</name>
    <name type="ordered locus">BA_1154</name>
    <name type="ordered locus">GBAA_1154</name>
    <name type="ordered locus">BAS1071</name>
</gene>
<dbReference type="EC" id="2.6.1.13" evidence="1"/>
<dbReference type="EMBL" id="AE016879">
    <property type="protein sequence ID" value="AAP25122.1"/>
    <property type="molecule type" value="Genomic_DNA"/>
</dbReference>
<dbReference type="EMBL" id="AE017334">
    <property type="protein sequence ID" value="AAT30245.1"/>
    <property type="molecule type" value="Genomic_DNA"/>
</dbReference>
<dbReference type="EMBL" id="AE017225">
    <property type="protein sequence ID" value="AAT53394.1"/>
    <property type="molecule type" value="Genomic_DNA"/>
</dbReference>
<dbReference type="RefSeq" id="NP_843636.1">
    <property type="nucleotide sequence ID" value="NC_003997.3"/>
</dbReference>
<dbReference type="RefSeq" id="WP_000616649.1">
    <property type="nucleotide sequence ID" value="NZ_WXXJ01000044.1"/>
</dbReference>
<dbReference type="RefSeq" id="YP_027343.1">
    <property type="nucleotide sequence ID" value="NC_005945.1"/>
</dbReference>
<dbReference type="PDB" id="3RUY">
    <property type="method" value="X-ray"/>
    <property type="resolution" value="2.65 A"/>
    <property type="chains" value="A/B=5-396"/>
</dbReference>
<dbReference type="PDBsum" id="3RUY"/>
<dbReference type="SMR" id="Q81TV3"/>
<dbReference type="STRING" id="261594.GBAA_1154"/>
<dbReference type="DNASU" id="1089152"/>
<dbReference type="GeneID" id="45021168"/>
<dbReference type="KEGG" id="ban:BA_1154"/>
<dbReference type="KEGG" id="banh:HYU01_05985"/>
<dbReference type="KEGG" id="bar:GBAA_1154"/>
<dbReference type="KEGG" id="bat:BAS1071"/>
<dbReference type="PATRIC" id="fig|198094.11.peg.1134"/>
<dbReference type="eggNOG" id="COG4992">
    <property type="taxonomic scope" value="Bacteria"/>
</dbReference>
<dbReference type="HOGENOM" id="CLU_016922_10_3_9"/>
<dbReference type="OMA" id="VCEGNFH"/>
<dbReference type="OrthoDB" id="9807885at2"/>
<dbReference type="UniPathway" id="UPA00098">
    <property type="reaction ID" value="UER00358"/>
</dbReference>
<dbReference type="EvolutionaryTrace" id="Q81TV3"/>
<dbReference type="Proteomes" id="UP000000427">
    <property type="component" value="Chromosome"/>
</dbReference>
<dbReference type="Proteomes" id="UP000000594">
    <property type="component" value="Chromosome"/>
</dbReference>
<dbReference type="GO" id="GO:0005737">
    <property type="term" value="C:cytoplasm"/>
    <property type="evidence" value="ECO:0007669"/>
    <property type="project" value="UniProtKB-SubCell"/>
</dbReference>
<dbReference type="GO" id="GO:0042802">
    <property type="term" value="F:identical protein binding"/>
    <property type="evidence" value="ECO:0007669"/>
    <property type="project" value="TreeGrafter"/>
</dbReference>
<dbReference type="GO" id="GO:0004587">
    <property type="term" value="F:ornithine aminotransferase activity"/>
    <property type="evidence" value="ECO:0007669"/>
    <property type="project" value="UniProtKB-UniRule"/>
</dbReference>
<dbReference type="GO" id="GO:0030170">
    <property type="term" value="F:pyridoxal phosphate binding"/>
    <property type="evidence" value="ECO:0007669"/>
    <property type="project" value="UniProtKB-UniRule"/>
</dbReference>
<dbReference type="GO" id="GO:0055129">
    <property type="term" value="P:L-proline biosynthetic process"/>
    <property type="evidence" value="ECO:0007669"/>
    <property type="project" value="UniProtKB-UniRule"/>
</dbReference>
<dbReference type="CDD" id="cd00610">
    <property type="entry name" value="OAT_like"/>
    <property type="match status" value="1"/>
</dbReference>
<dbReference type="FunFam" id="3.40.640.10:FF:000011">
    <property type="entry name" value="Ornithine aminotransferase"/>
    <property type="match status" value="1"/>
</dbReference>
<dbReference type="Gene3D" id="3.90.1150.10">
    <property type="entry name" value="Aspartate Aminotransferase, domain 1"/>
    <property type="match status" value="1"/>
</dbReference>
<dbReference type="Gene3D" id="3.40.640.10">
    <property type="entry name" value="Type I PLP-dependent aspartate aminotransferase-like (Major domain)"/>
    <property type="match status" value="1"/>
</dbReference>
<dbReference type="HAMAP" id="MF_01689">
    <property type="entry name" value="Ornith_aminotrans_3"/>
    <property type="match status" value="1"/>
</dbReference>
<dbReference type="InterPro" id="IPR005814">
    <property type="entry name" value="Aminotrans_3"/>
</dbReference>
<dbReference type="InterPro" id="IPR049704">
    <property type="entry name" value="Aminotrans_3_PPA_site"/>
</dbReference>
<dbReference type="InterPro" id="IPR050103">
    <property type="entry name" value="Class-III_PLP-dep_AT"/>
</dbReference>
<dbReference type="InterPro" id="IPR010164">
    <property type="entry name" value="Orn_aminotrans"/>
</dbReference>
<dbReference type="InterPro" id="IPR034757">
    <property type="entry name" value="Ornith_aminotrans_bact"/>
</dbReference>
<dbReference type="InterPro" id="IPR015424">
    <property type="entry name" value="PyrdxlP-dep_Trfase"/>
</dbReference>
<dbReference type="InterPro" id="IPR015421">
    <property type="entry name" value="PyrdxlP-dep_Trfase_major"/>
</dbReference>
<dbReference type="InterPro" id="IPR015422">
    <property type="entry name" value="PyrdxlP-dep_Trfase_small"/>
</dbReference>
<dbReference type="NCBIfam" id="TIGR01885">
    <property type="entry name" value="Orn_aminotrans"/>
    <property type="match status" value="1"/>
</dbReference>
<dbReference type="NCBIfam" id="NF003145">
    <property type="entry name" value="PRK04073.1"/>
    <property type="match status" value="1"/>
</dbReference>
<dbReference type="PANTHER" id="PTHR11986">
    <property type="entry name" value="AMINOTRANSFERASE CLASS III"/>
    <property type="match status" value="1"/>
</dbReference>
<dbReference type="PANTHER" id="PTHR11986:SF18">
    <property type="entry name" value="ORNITHINE AMINOTRANSFERASE, MITOCHONDRIAL"/>
    <property type="match status" value="1"/>
</dbReference>
<dbReference type="Pfam" id="PF00202">
    <property type="entry name" value="Aminotran_3"/>
    <property type="match status" value="1"/>
</dbReference>
<dbReference type="PIRSF" id="PIRSF000521">
    <property type="entry name" value="Transaminase_4ab_Lys_Orn"/>
    <property type="match status" value="1"/>
</dbReference>
<dbReference type="SUPFAM" id="SSF53383">
    <property type="entry name" value="PLP-dependent transferases"/>
    <property type="match status" value="1"/>
</dbReference>
<dbReference type="PROSITE" id="PS00600">
    <property type="entry name" value="AA_TRANSFER_CLASS_3"/>
    <property type="match status" value="1"/>
</dbReference>
<comment type="function">
    <text evidence="1">Catalyzes the interconversion of ornithine to glutamate semialdehyde.</text>
</comment>
<comment type="catalytic activity">
    <reaction evidence="1">
        <text>a 2-oxocarboxylate + L-ornithine = L-glutamate 5-semialdehyde + an L-alpha-amino acid</text>
        <dbReference type="Rhea" id="RHEA:13877"/>
        <dbReference type="ChEBI" id="CHEBI:35179"/>
        <dbReference type="ChEBI" id="CHEBI:46911"/>
        <dbReference type="ChEBI" id="CHEBI:58066"/>
        <dbReference type="ChEBI" id="CHEBI:59869"/>
        <dbReference type="EC" id="2.6.1.13"/>
    </reaction>
</comment>
<comment type="cofactor">
    <cofactor evidence="1">
        <name>pyridoxal 5'-phosphate</name>
        <dbReference type="ChEBI" id="CHEBI:597326"/>
    </cofactor>
</comment>
<comment type="pathway">
    <text evidence="1">Amino-acid biosynthesis; L-proline biosynthesis; L-glutamate 5-semialdehyde from L-ornithine: step 1/1.</text>
</comment>
<comment type="subcellular location">
    <subcellularLocation>
        <location evidence="1">Cytoplasm</location>
    </subcellularLocation>
</comment>
<comment type="similarity">
    <text evidence="1">Belongs to the class-III pyridoxal-phosphate-dependent aminotransferase family. OAT subfamily.</text>
</comment>